<comment type="function">
    <text evidence="1">Responsible for the release of ribosomes from messenger RNA at the termination of protein biosynthesis. May increase the efficiency of translation by recycling ribosomes from one round of translation to another.</text>
</comment>
<comment type="subcellular location">
    <subcellularLocation>
        <location evidence="1">Cytoplasm</location>
    </subcellularLocation>
</comment>
<comment type="similarity">
    <text evidence="1">Belongs to the RRF family.</text>
</comment>
<feature type="chain" id="PRO_1000194917" description="Ribosome-recycling factor">
    <location>
        <begin position="1"/>
        <end position="182"/>
    </location>
</feature>
<proteinExistence type="inferred from homology"/>
<name>RRF_GLOC7</name>
<evidence type="ECO:0000255" key="1">
    <source>
        <dbReference type="HAMAP-Rule" id="MF_00040"/>
    </source>
</evidence>
<sequence>MKLSEVQDNMQKTIESTQRSFNTIRTGRANSALLDRVMVDYYGTETPLKSLANITTPDATTIAIQPYDRGSMGQIEKAIQLSDIGLTPNNDGQMIRLNIPPLTTERRKELVKLAGKLAEEGKVAIRNIRRDAIDSVRKQEKNHELSEDESRNLQDEIQKVTDEYTAKIDELLAAKEKDISTV</sequence>
<organism>
    <name type="scientific">Gloeothece citriformis (strain PCC 7424)</name>
    <name type="common">Cyanothece sp. (strain PCC 7424)</name>
    <dbReference type="NCBI Taxonomy" id="65393"/>
    <lineage>
        <taxon>Bacteria</taxon>
        <taxon>Bacillati</taxon>
        <taxon>Cyanobacteriota</taxon>
        <taxon>Cyanophyceae</taxon>
        <taxon>Oscillatoriophycideae</taxon>
        <taxon>Chroococcales</taxon>
        <taxon>Aphanothecaceae</taxon>
        <taxon>Gloeothece</taxon>
        <taxon>Gloeothece citriformis</taxon>
    </lineage>
</organism>
<dbReference type="EMBL" id="CP001291">
    <property type="protein sequence ID" value="ACK71110.1"/>
    <property type="molecule type" value="Genomic_DNA"/>
</dbReference>
<dbReference type="RefSeq" id="WP_015954711.1">
    <property type="nucleotide sequence ID" value="NC_011729.1"/>
</dbReference>
<dbReference type="SMR" id="B7K7R4"/>
<dbReference type="STRING" id="65393.PCC7424_2698"/>
<dbReference type="KEGG" id="cyc:PCC7424_2698"/>
<dbReference type="eggNOG" id="COG0233">
    <property type="taxonomic scope" value="Bacteria"/>
</dbReference>
<dbReference type="HOGENOM" id="CLU_073981_2_0_3"/>
<dbReference type="OrthoDB" id="9804006at2"/>
<dbReference type="Proteomes" id="UP000002384">
    <property type="component" value="Chromosome"/>
</dbReference>
<dbReference type="GO" id="GO:0005737">
    <property type="term" value="C:cytoplasm"/>
    <property type="evidence" value="ECO:0007669"/>
    <property type="project" value="UniProtKB-SubCell"/>
</dbReference>
<dbReference type="GO" id="GO:0043023">
    <property type="term" value="F:ribosomal large subunit binding"/>
    <property type="evidence" value="ECO:0007669"/>
    <property type="project" value="TreeGrafter"/>
</dbReference>
<dbReference type="GO" id="GO:0006415">
    <property type="term" value="P:translational termination"/>
    <property type="evidence" value="ECO:0007669"/>
    <property type="project" value="UniProtKB-UniRule"/>
</dbReference>
<dbReference type="CDD" id="cd00520">
    <property type="entry name" value="RRF"/>
    <property type="match status" value="1"/>
</dbReference>
<dbReference type="FunFam" id="1.10.132.20:FF:000001">
    <property type="entry name" value="Ribosome-recycling factor"/>
    <property type="match status" value="1"/>
</dbReference>
<dbReference type="FunFam" id="3.30.1360.40:FF:000001">
    <property type="entry name" value="Ribosome-recycling factor"/>
    <property type="match status" value="1"/>
</dbReference>
<dbReference type="Gene3D" id="3.30.1360.40">
    <property type="match status" value="1"/>
</dbReference>
<dbReference type="Gene3D" id="1.10.132.20">
    <property type="entry name" value="Ribosome-recycling factor"/>
    <property type="match status" value="1"/>
</dbReference>
<dbReference type="HAMAP" id="MF_00040">
    <property type="entry name" value="RRF"/>
    <property type="match status" value="1"/>
</dbReference>
<dbReference type="InterPro" id="IPR002661">
    <property type="entry name" value="Ribosome_recyc_fac"/>
</dbReference>
<dbReference type="InterPro" id="IPR023584">
    <property type="entry name" value="Ribosome_recyc_fac_dom"/>
</dbReference>
<dbReference type="InterPro" id="IPR036191">
    <property type="entry name" value="RRF_sf"/>
</dbReference>
<dbReference type="NCBIfam" id="TIGR00496">
    <property type="entry name" value="frr"/>
    <property type="match status" value="1"/>
</dbReference>
<dbReference type="PANTHER" id="PTHR20982:SF3">
    <property type="entry name" value="MITOCHONDRIAL RIBOSOME RECYCLING FACTOR PSEUDO 1"/>
    <property type="match status" value="1"/>
</dbReference>
<dbReference type="PANTHER" id="PTHR20982">
    <property type="entry name" value="RIBOSOME RECYCLING FACTOR"/>
    <property type="match status" value="1"/>
</dbReference>
<dbReference type="Pfam" id="PF01765">
    <property type="entry name" value="RRF"/>
    <property type="match status" value="1"/>
</dbReference>
<dbReference type="SUPFAM" id="SSF55194">
    <property type="entry name" value="Ribosome recycling factor, RRF"/>
    <property type="match status" value="1"/>
</dbReference>
<gene>
    <name evidence="1" type="primary">frr</name>
    <name type="ordered locus">PCC7424_2698</name>
</gene>
<accession>B7K7R4</accession>
<keyword id="KW-0963">Cytoplasm</keyword>
<keyword id="KW-0648">Protein biosynthesis</keyword>
<keyword id="KW-1185">Reference proteome</keyword>
<protein>
    <recommendedName>
        <fullName evidence="1">Ribosome-recycling factor</fullName>
        <shortName evidence="1">RRF</shortName>
    </recommendedName>
    <alternativeName>
        <fullName evidence="1">Ribosome-releasing factor</fullName>
    </alternativeName>
</protein>
<reference key="1">
    <citation type="journal article" date="2011" name="MBio">
        <title>Novel metabolic attributes of the genus Cyanothece, comprising a group of unicellular nitrogen-fixing Cyanobacteria.</title>
        <authorList>
            <person name="Bandyopadhyay A."/>
            <person name="Elvitigala T."/>
            <person name="Welsh E."/>
            <person name="Stockel J."/>
            <person name="Liberton M."/>
            <person name="Min H."/>
            <person name="Sherman L.A."/>
            <person name="Pakrasi H.B."/>
        </authorList>
    </citation>
    <scope>NUCLEOTIDE SEQUENCE [LARGE SCALE GENOMIC DNA]</scope>
    <source>
        <strain>PCC 7424</strain>
    </source>
</reference>